<comment type="function">
    <text evidence="1">Catalyzes the transfer of the enolpyruvyl moiety of phosphoenolpyruvate (PEP) to the 5-hydroxyl of shikimate-3-phosphate (S3P) to produce enolpyruvyl shikimate-3-phosphate and inorganic phosphate.</text>
</comment>
<comment type="catalytic activity">
    <reaction evidence="1">
        <text>3-phosphoshikimate + phosphoenolpyruvate = 5-O-(1-carboxyvinyl)-3-phosphoshikimate + phosphate</text>
        <dbReference type="Rhea" id="RHEA:21256"/>
        <dbReference type="ChEBI" id="CHEBI:43474"/>
        <dbReference type="ChEBI" id="CHEBI:57701"/>
        <dbReference type="ChEBI" id="CHEBI:58702"/>
        <dbReference type="ChEBI" id="CHEBI:145989"/>
        <dbReference type="EC" id="2.5.1.19"/>
    </reaction>
    <physiologicalReaction direction="left-to-right" evidence="1">
        <dbReference type="Rhea" id="RHEA:21257"/>
    </physiologicalReaction>
</comment>
<comment type="pathway">
    <text evidence="1">Metabolic intermediate biosynthesis; chorismate biosynthesis; chorismate from D-erythrose 4-phosphate and phosphoenolpyruvate: step 6/7.</text>
</comment>
<comment type="subunit">
    <text evidence="1">Monomer.</text>
</comment>
<comment type="subcellular location">
    <subcellularLocation>
        <location evidence="1">Cytoplasm</location>
    </subcellularLocation>
</comment>
<comment type="similarity">
    <text evidence="1">Belongs to the EPSP synthase family.</text>
</comment>
<name>AROA_XANAC</name>
<accession>Q8PLY5</accession>
<sequence>MSSSTHHWIARRGTALQGSLAIPGDKSVSHRAVMFAALADGVSQIDGFLEGEDTRSTAAIFAKLGVRIETPSASQRIVHGVGVDGLQPPTEVLDCGNAGTGMRLLAGLLAAQRFDSVLVGDASLSKRPMRRVTGPLAQMGARIETQDDGTPPLHVRGGQALHGIDFVSPVASAQVKSAVLLAGLYAQGETSVTEPHPTRDYTERMLSAFGVEIDFSPGKARLRGGQRLRATDIAVPADFSSAAFFIVAASVVPGSEVVLRAVGLNPRRTGLLAALRLMGADIGEENHAEHGGEPVADLHVRYAPLRGAQIPEALVPDMIDEFPALFVAAAAASGQTVVTGAAELRVKESDRLAAMATGLRTLGIQVDETPDGATIHGGSIGSGVIESHGDHRIAMAFAIAGQLSMGQVQVNDVANVATSFPGFDTLAQDVGFGLETAGHR</sequence>
<evidence type="ECO:0000255" key="1">
    <source>
        <dbReference type="HAMAP-Rule" id="MF_00210"/>
    </source>
</evidence>
<organism>
    <name type="scientific">Xanthomonas axonopodis pv. citri (strain 306)</name>
    <dbReference type="NCBI Taxonomy" id="190486"/>
    <lineage>
        <taxon>Bacteria</taxon>
        <taxon>Pseudomonadati</taxon>
        <taxon>Pseudomonadota</taxon>
        <taxon>Gammaproteobacteria</taxon>
        <taxon>Lysobacterales</taxon>
        <taxon>Lysobacteraceae</taxon>
        <taxon>Xanthomonas</taxon>
    </lineage>
</organism>
<dbReference type="EC" id="2.5.1.19" evidence="1"/>
<dbReference type="EMBL" id="AE008923">
    <property type="protein sequence ID" value="AAM36518.1"/>
    <property type="molecule type" value="Genomic_DNA"/>
</dbReference>
<dbReference type="RefSeq" id="WP_011051057.1">
    <property type="nucleotide sequence ID" value="NC_003919.1"/>
</dbReference>
<dbReference type="SMR" id="Q8PLY5"/>
<dbReference type="GeneID" id="66910808"/>
<dbReference type="KEGG" id="xac:XAC1650"/>
<dbReference type="eggNOG" id="COG0128">
    <property type="taxonomic scope" value="Bacteria"/>
</dbReference>
<dbReference type="HOGENOM" id="CLU_024321_0_1_6"/>
<dbReference type="UniPathway" id="UPA00053">
    <property type="reaction ID" value="UER00089"/>
</dbReference>
<dbReference type="Proteomes" id="UP000000576">
    <property type="component" value="Chromosome"/>
</dbReference>
<dbReference type="GO" id="GO:0005737">
    <property type="term" value="C:cytoplasm"/>
    <property type="evidence" value="ECO:0007669"/>
    <property type="project" value="UniProtKB-SubCell"/>
</dbReference>
<dbReference type="GO" id="GO:0003866">
    <property type="term" value="F:3-phosphoshikimate 1-carboxyvinyltransferase activity"/>
    <property type="evidence" value="ECO:0007669"/>
    <property type="project" value="UniProtKB-UniRule"/>
</dbReference>
<dbReference type="GO" id="GO:0008652">
    <property type="term" value="P:amino acid biosynthetic process"/>
    <property type="evidence" value="ECO:0007669"/>
    <property type="project" value="UniProtKB-KW"/>
</dbReference>
<dbReference type="GO" id="GO:0009073">
    <property type="term" value="P:aromatic amino acid family biosynthetic process"/>
    <property type="evidence" value="ECO:0007669"/>
    <property type="project" value="UniProtKB-KW"/>
</dbReference>
<dbReference type="GO" id="GO:0009423">
    <property type="term" value="P:chorismate biosynthetic process"/>
    <property type="evidence" value="ECO:0007669"/>
    <property type="project" value="UniProtKB-UniRule"/>
</dbReference>
<dbReference type="CDD" id="cd01556">
    <property type="entry name" value="EPSP_synthase"/>
    <property type="match status" value="1"/>
</dbReference>
<dbReference type="FunFam" id="3.65.10.10:FF:000005">
    <property type="entry name" value="3-phosphoshikimate 1-carboxyvinyltransferase"/>
    <property type="match status" value="1"/>
</dbReference>
<dbReference type="FunFam" id="3.65.10.10:FF:000006">
    <property type="entry name" value="3-phosphoshikimate 1-carboxyvinyltransferase"/>
    <property type="match status" value="1"/>
</dbReference>
<dbReference type="Gene3D" id="3.65.10.10">
    <property type="entry name" value="Enolpyruvate transferase domain"/>
    <property type="match status" value="2"/>
</dbReference>
<dbReference type="HAMAP" id="MF_00210">
    <property type="entry name" value="EPSP_synth"/>
    <property type="match status" value="1"/>
</dbReference>
<dbReference type="InterPro" id="IPR001986">
    <property type="entry name" value="Enolpyruvate_Tfrase_dom"/>
</dbReference>
<dbReference type="InterPro" id="IPR036968">
    <property type="entry name" value="Enolpyruvate_Tfrase_sf"/>
</dbReference>
<dbReference type="InterPro" id="IPR006264">
    <property type="entry name" value="EPSP_synthase"/>
</dbReference>
<dbReference type="InterPro" id="IPR023193">
    <property type="entry name" value="EPSP_synthase_CS"/>
</dbReference>
<dbReference type="InterPro" id="IPR013792">
    <property type="entry name" value="RNA3'P_cycl/enolpyr_Trfase_a/b"/>
</dbReference>
<dbReference type="NCBIfam" id="TIGR01356">
    <property type="entry name" value="aroA"/>
    <property type="match status" value="1"/>
</dbReference>
<dbReference type="PANTHER" id="PTHR21090">
    <property type="entry name" value="AROM/DEHYDROQUINATE SYNTHASE"/>
    <property type="match status" value="1"/>
</dbReference>
<dbReference type="PANTHER" id="PTHR21090:SF5">
    <property type="entry name" value="PENTAFUNCTIONAL AROM POLYPEPTIDE"/>
    <property type="match status" value="1"/>
</dbReference>
<dbReference type="Pfam" id="PF00275">
    <property type="entry name" value="EPSP_synthase"/>
    <property type="match status" value="1"/>
</dbReference>
<dbReference type="PIRSF" id="PIRSF000505">
    <property type="entry name" value="EPSPS"/>
    <property type="match status" value="1"/>
</dbReference>
<dbReference type="SUPFAM" id="SSF55205">
    <property type="entry name" value="EPT/RTPC-like"/>
    <property type="match status" value="1"/>
</dbReference>
<dbReference type="PROSITE" id="PS00104">
    <property type="entry name" value="EPSP_SYNTHASE_1"/>
    <property type="match status" value="1"/>
</dbReference>
<dbReference type="PROSITE" id="PS00885">
    <property type="entry name" value="EPSP_SYNTHASE_2"/>
    <property type="match status" value="1"/>
</dbReference>
<feature type="chain" id="PRO_0000088317" description="3-phosphoshikimate 1-carboxyvinyltransferase">
    <location>
        <begin position="1"/>
        <end position="440"/>
    </location>
</feature>
<feature type="active site" description="Proton acceptor" evidence="1">
    <location>
        <position position="320"/>
    </location>
</feature>
<feature type="binding site" evidence="1">
    <location>
        <position position="26"/>
    </location>
    <ligand>
        <name>3-phosphoshikimate</name>
        <dbReference type="ChEBI" id="CHEBI:145989"/>
    </ligand>
</feature>
<feature type="binding site" evidence="1">
    <location>
        <position position="26"/>
    </location>
    <ligand>
        <name>phosphoenolpyruvate</name>
        <dbReference type="ChEBI" id="CHEBI:58702"/>
    </ligand>
</feature>
<feature type="binding site" evidence="1">
    <location>
        <position position="27"/>
    </location>
    <ligand>
        <name>3-phosphoshikimate</name>
        <dbReference type="ChEBI" id="CHEBI:145989"/>
    </ligand>
</feature>
<feature type="binding site" evidence="1">
    <location>
        <position position="31"/>
    </location>
    <ligand>
        <name>3-phosphoshikimate</name>
        <dbReference type="ChEBI" id="CHEBI:145989"/>
    </ligand>
</feature>
<feature type="binding site" evidence="1">
    <location>
        <position position="99"/>
    </location>
    <ligand>
        <name>phosphoenolpyruvate</name>
        <dbReference type="ChEBI" id="CHEBI:58702"/>
    </ligand>
</feature>
<feature type="binding site" evidence="1">
    <location>
        <position position="127"/>
    </location>
    <ligand>
        <name>phosphoenolpyruvate</name>
        <dbReference type="ChEBI" id="CHEBI:58702"/>
    </ligand>
</feature>
<feature type="binding site" evidence="1">
    <location>
        <position position="172"/>
    </location>
    <ligand>
        <name>3-phosphoshikimate</name>
        <dbReference type="ChEBI" id="CHEBI:145989"/>
    </ligand>
</feature>
<feature type="binding site" evidence="1">
    <location>
        <position position="174"/>
    </location>
    <ligand>
        <name>3-phosphoshikimate</name>
        <dbReference type="ChEBI" id="CHEBI:145989"/>
    </ligand>
</feature>
<feature type="binding site" evidence="1">
    <location>
        <position position="174"/>
    </location>
    <ligand>
        <name>phosphoenolpyruvate</name>
        <dbReference type="ChEBI" id="CHEBI:58702"/>
    </ligand>
</feature>
<feature type="binding site" evidence="1">
    <location>
        <position position="320"/>
    </location>
    <ligand>
        <name>3-phosphoshikimate</name>
        <dbReference type="ChEBI" id="CHEBI:145989"/>
    </ligand>
</feature>
<feature type="binding site" evidence="1">
    <location>
        <position position="347"/>
    </location>
    <ligand>
        <name>3-phosphoshikimate</name>
        <dbReference type="ChEBI" id="CHEBI:145989"/>
    </ligand>
</feature>
<feature type="binding site" evidence="1">
    <location>
        <position position="351"/>
    </location>
    <ligand>
        <name>phosphoenolpyruvate</name>
        <dbReference type="ChEBI" id="CHEBI:58702"/>
    </ligand>
</feature>
<feature type="binding site" evidence="1">
    <location>
        <position position="392"/>
    </location>
    <ligand>
        <name>phosphoenolpyruvate</name>
        <dbReference type="ChEBI" id="CHEBI:58702"/>
    </ligand>
</feature>
<protein>
    <recommendedName>
        <fullName evidence="1">3-phosphoshikimate 1-carboxyvinyltransferase</fullName>
        <ecNumber evidence="1">2.5.1.19</ecNumber>
    </recommendedName>
    <alternativeName>
        <fullName evidence="1">5-enolpyruvylshikimate-3-phosphate synthase</fullName>
        <shortName evidence="1">EPSP synthase</shortName>
        <shortName evidence="1">EPSPS</shortName>
    </alternativeName>
</protein>
<keyword id="KW-0028">Amino-acid biosynthesis</keyword>
<keyword id="KW-0057">Aromatic amino acid biosynthesis</keyword>
<keyword id="KW-0963">Cytoplasm</keyword>
<keyword id="KW-0808">Transferase</keyword>
<reference key="1">
    <citation type="journal article" date="2002" name="Nature">
        <title>Comparison of the genomes of two Xanthomonas pathogens with differing host specificities.</title>
        <authorList>
            <person name="da Silva A.C.R."/>
            <person name="Ferro J.A."/>
            <person name="Reinach F.C."/>
            <person name="Farah C.S."/>
            <person name="Furlan L.R."/>
            <person name="Quaggio R.B."/>
            <person name="Monteiro-Vitorello C.B."/>
            <person name="Van Sluys M.A."/>
            <person name="Almeida N.F. Jr."/>
            <person name="Alves L.M.C."/>
            <person name="do Amaral A.M."/>
            <person name="Bertolini M.C."/>
            <person name="Camargo L.E.A."/>
            <person name="Camarotte G."/>
            <person name="Cannavan F."/>
            <person name="Cardozo J."/>
            <person name="Chambergo F."/>
            <person name="Ciapina L.P."/>
            <person name="Cicarelli R.M.B."/>
            <person name="Coutinho L.L."/>
            <person name="Cursino-Santos J.R."/>
            <person name="El-Dorry H."/>
            <person name="Faria J.B."/>
            <person name="Ferreira A.J.S."/>
            <person name="Ferreira R.C.C."/>
            <person name="Ferro M.I.T."/>
            <person name="Formighieri E.F."/>
            <person name="Franco M.C."/>
            <person name="Greggio C.C."/>
            <person name="Gruber A."/>
            <person name="Katsuyama A.M."/>
            <person name="Kishi L.T."/>
            <person name="Leite R.P."/>
            <person name="Lemos E.G.M."/>
            <person name="Lemos M.V.F."/>
            <person name="Locali E.C."/>
            <person name="Machado M.A."/>
            <person name="Madeira A.M.B.N."/>
            <person name="Martinez-Rossi N.M."/>
            <person name="Martins E.C."/>
            <person name="Meidanis J."/>
            <person name="Menck C.F.M."/>
            <person name="Miyaki C.Y."/>
            <person name="Moon D.H."/>
            <person name="Moreira L.M."/>
            <person name="Novo M.T.M."/>
            <person name="Okura V.K."/>
            <person name="Oliveira M.C."/>
            <person name="Oliveira V.R."/>
            <person name="Pereira H.A."/>
            <person name="Rossi A."/>
            <person name="Sena J.A.D."/>
            <person name="Silva C."/>
            <person name="de Souza R.F."/>
            <person name="Spinola L.A.F."/>
            <person name="Takita M.A."/>
            <person name="Tamura R.E."/>
            <person name="Teixeira E.C."/>
            <person name="Tezza R.I.D."/>
            <person name="Trindade dos Santos M."/>
            <person name="Truffi D."/>
            <person name="Tsai S.M."/>
            <person name="White F.F."/>
            <person name="Setubal J.C."/>
            <person name="Kitajima J.P."/>
        </authorList>
    </citation>
    <scope>NUCLEOTIDE SEQUENCE [LARGE SCALE GENOMIC DNA]</scope>
    <source>
        <strain>306</strain>
    </source>
</reference>
<proteinExistence type="inferred from homology"/>
<gene>
    <name evidence="1" type="primary">aroA</name>
    <name type="ordered locus">XAC1650</name>
</gene>